<gene>
    <name type="ordered locus">Os08g0188000</name>
    <name type="ordered locus">LOC_Os08g08860</name>
    <name type="ORF">P0020B10.28</name>
</gene>
<proteinExistence type="evidence at transcript level"/>
<sequence>MLLPRDLLLLPWRRATAAGEAIARRLNHHRAPPFSDPDDDPPFTRLAERPPRAPSKKKKKEEEDQGGRIRPPEPASSDLPFDFRYSYSETDPAWRPIGFREPTRFSPFGPGRLDRPWDGVAAAAARGEGAGAAATSREEVLGEPLAEEEVAQLVERYRHSDCSRQINLGKGGVTHNMIDDIHNHWKRAEAVRIKCLGVPTLDMDNICFHLEDKTGGKVIYRNINILILYRGRNYDPKQRPQIPLMLWKPLAPIYPRLVQNVADGLTFEKTKELRNTGLNSSPLMKLTRNGVYVNVVDRVREAFKTVEVVRLDCSHVGSSDCKKIGVKLRDLVPCVPLLFKDEQIILWRGKVKQENSVSLQFSPEPS</sequence>
<feature type="transit peptide" description="Mitochondrion" evidence="2">
    <location>
        <begin position="1"/>
        <end position="14"/>
    </location>
</feature>
<feature type="chain" id="PRO_0000283623" description="CRS2-associated factor 2, mitochondrial">
    <location>
        <begin position="15"/>
        <end position="366"/>
    </location>
</feature>
<feature type="domain" description="CRM 1" evidence="3">
    <location>
        <begin position="143"/>
        <end position="241"/>
    </location>
</feature>
<feature type="domain" description="CRM 2" evidence="3">
    <location>
        <begin position="263"/>
        <end position="359"/>
    </location>
</feature>
<feature type="region of interest" description="Disordered" evidence="4">
    <location>
        <begin position="24"/>
        <end position="82"/>
    </location>
</feature>
<feature type="compositionally biased region" description="Basic and acidic residues" evidence="4">
    <location>
        <begin position="60"/>
        <end position="71"/>
    </location>
</feature>
<feature type="sequence conflict" description="In Ref. 4; AK107337." evidence="5" ref="4">
    <original>K</original>
    <variation>R</variation>
    <location>
        <position position="186"/>
    </location>
</feature>
<accession>Q0J7J7</accession>
<organism>
    <name type="scientific">Oryza sativa subsp. japonica</name>
    <name type="common">Rice</name>
    <dbReference type="NCBI Taxonomy" id="39947"/>
    <lineage>
        <taxon>Eukaryota</taxon>
        <taxon>Viridiplantae</taxon>
        <taxon>Streptophyta</taxon>
        <taxon>Embryophyta</taxon>
        <taxon>Tracheophyta</taxon>
        <taxon>Spermatophyta</taxon>
        <taxon>Magnoliopsida</taxon>
        <taxon>Liliopsida</taxon>
        <taxon>Poales</taxon>
        <taxon>Poaceae</taxon>
        <taxon>BOP clade</taxon>
        <taxon>Oryzoideae</taxon>
        <taxon>Oryzeae</taxon>
        <taxon>Oryzinae</taxon>
        <taxon>Oryza</taxon>
        <taxon>Oryza sativa</taxon>
    </lineage>
</organism>
<name>CAF2M_ORYSJ</name>
<protein>
    <recommendedName>
        <fullName>CRS2-associated factor 2, mitochondrial</fullName>
    </recommendedName>
</protein>
<keyword id="KW-0496">Mitochondrion</keyword>
<keyword id="KW-0507">mRNA processing</keyword>
<keyword id="KW-0508">mRNA splicing</keyword>
<keyword id="KW-1185">Reference proteome</keyword>
<keyword id="KW-0677">Repeat</keyword>
<keyword id="KW-0687">Ribonucleoprotein</keyword>
<keyword id="KW-0694">RNA-binding</keyword>
<keyword id="KW-0809">Transit peptide</keyword>
<reference key="1">
    <citation type="journal article" date="2005" name="Nature">
        <title>The map-based sequence of the rice genome.</title>
        <authorList>
            <consortium name="International rice genome sequencing project (IRGSP)"/>
        </authorList>
    </citation>
    <scope>NUCLEOTIDE SEQUENCE [LARGE SCALE GENOMIC DNA]</scope>
    <source>
        <strain>cv. Nipponbare</strain>
    </source>
</reference>
<reference key="2">
    <citation type="journal article" date="2008" name="Nucleic Acids Res.">
        <title>The rice annotation project database (RAP-DB): 2008 update.</title>
        <authorList>
            <consortium name="The rice annotation project (RAP)"/>
        </authorList>
    </citation>
    <scope>GENOME REANNOTATION</scope>
    <source>
        <strain>cv. Nipponbare</strain>
    </source>
</reference>
<reference key="3">
    <citation type="journal article" date="2013" name="Rice">
        <title>Improvement of the Oryza sativa Nipponbare reference genome using next generation sequence and optical map data.</title>
        <authorList>
            <person name="Kawahara Y."/>
            <person name="de la Bastide M."/>
            <person name="Hamilton J.P."/>
            <person name="Kanamori H."/>
            <person name="McCombie W.R."/>
            <person name="Ouyang S."/>
            <person name="Schwartz D.C."/>
            <person name="Tanaka T."/>
            <person name="Wu J."/>
            <person name="Zhou S."/>
            <person name="Childs K.L."/>
            <person name="Davidson R.M."/>
            <person name="Lin H."/>
            <person name="Quesada-Ocampo L."/>
            <person name="Vaillancourt B."/>
            <person name="Sakai H."/>
            <person name="Lee S.S."/>
            <person name="Kim J."/>
            <person name="Numa H."/>
            <person name="Itoh T."/>
            <person name="Buell C.R."/>
            <person name="Matsumoto T."/>
        </authorList>
    </citation>
    <scope>GENOME REANNOTATION</scope>
    <source>
        <strain>cv. Nipponbare</strain>
    </source>
</reference>
<reference key="4">
    <citation type="journal article" date="2003" name="Science">
        <title>Collection, mapping, and annotation of over 28,000 cDNA clones from japonica rice.</title>
        <authorList>
            <consortium name="The rice full-length cDNA consortium"/>
        </authorList>
    </citation>
    <scope>NUCLEOTIDE SEQUENCE [LARGE SCALE MRNA] OF 24-366</scope>
    <source>
        <strain>cv. Nipponbare</strain>
    </source>
</reference>
<comment type="function">
    <text evidence="1">May be involved in the splicing of group IIB introns in mitochondria.</text>
</comment>
<comment type="subunit">
    <text evidence="1">Part of large ribonucleo-protein complexes that include group IIB introns.</text>
</comment>
<comment type="subcellular location">
    <subcellularLocation>
        <location evidence="5">Mitochondrion</location>
    </subcellularLocation>
</comment>
<comment type="sequence caution" evidence="5">
    <conflict type="erroneous initiation">
        <sequence resource="EMBL-CDS" id="BAF23068"/>
    </conflict>
</comment>
<evidence type="ECO:0000250" key="1"/>
<evidence type="ECO:0000255" key="2"/>
<evidence type="ECO:0000255" key="3">
    <source>
        <dbReference type="PROSITE-ProRule" id="PRU00626"/>
    </source>
</evidence>
<evidence type="ECO:0000256" key="4">
    <source>
        <dbReference type="SAM" id="MobiDB-lite"/>
    </source>
</evidence>
<evidence type="ECO:0000305" key="5"/>
<dbReference type="EMBL" id="AP004656">
    <property type="status" value="NOT_ANNOTATED_CDS"/>
    <property type="molecule type" value="Genomic_DNA"/>
</dbReference>
<dbReference type="EMBL" id="AP008214">
    <property type="protein sequence ID" value="BAF23068.1"/>
    <property type="status" value="ALT_INIT"/>
    <property type="molecule type" value="Genomic_DNA"/>
</dbReference>
<dbReference type="EMBL" id="AP014964">
    <property type="status" value="NOT_ANNOTATED_CDS"/>
    <property type="molecule type" value="Genomic_DNA"/>
</dbReference>
<dbReference type="EMBL" id="AK107337">
    <property type="status" value="NOT_ANNOTATED_CDS"/>
    <property type="molecule type" value="mRNA"/>
</dbReference>
<dbReference type="RefSeq" id="XP_015648481.1">
    <property type="nucleotide sequence ID" value="XM_015792995.1"/>
</dbReference>
<dbReference type="SMR" id="Q0J7J7"/>
<dbReference type="FunCoup" id="Q0J7J7">
    <property type="interactions" value="1925"/>
</dbReference>
<dbReference type="STRING" id="39947.Q0J7J7"/>
<dbReference type="PaxDb" id="39947-Q0J7J7"/>
<dbReference type="KEGG" id="dosa:Os08g0188000"/>
<dbReference type="eggNOG" id="ENOG502QT4I">
    <property type="taxonomic scope" value="Eukaryota"/>
</dbReference>
<dbReference type="HOGENOM" id="CLU_053415_1_0_1"/>
<dbReference type="InParanoid" id="Q0J7J7"/>
<dbReference type="OrthoDB" id="1911210at2759"/>
<dbReference type="Proteomes" id="UP000000763">
    <property type="component" value="Chromosome 8"/>
</dbReference>
<dbReference type="Proteomes" id="UP000059680">
    <property type="component" value="Chromosome 8"/>
</dbReference>
<dbReference type="GO" id="GO:0005739">
    <property type="term" value="C:mitochondrion"/>
    <property type="evidence" value="ECO:0007669"/>
    <property type="project" value="UniProtKB-SubCell"/>
</dbReference>
<dbReference type="GO" id="GO:1990904">
    <property type="term" value="C:ribonucleoprotein complex"/>
    <property type="evidence" value="ECO:0007669"/>
    <property type="project" value="UniProtKB-KW"/>
</dbReference>
<dbReference type="GO" id="GO:0003723">
    <property type="term" value="F:RNA binding"/>
    <property type="evidence" value="ECO:0007669"/>
    <property type="project" value="UniProtKB-KW"/>
</dbReference>
<dbReference type="GO" id="GO:0000373">
    <property type="term" value="P:Group II intron splicing"/>
    <property type="evidence" value="ECO:0007669"/>
    <property type="project" value="InterPro"/>
</dbReference>
<dbReference type="GO" id="GO:0006397">
    <property type="term" value="P:mRNA processing"/>
    <property type="evidence" value="ECO:0007669"/>
    <property type="project" value="UniProtKB-KW"/>
</dbReference>
<dbReference type="FunFam" id="3.30.110.60:FF:000002">
    <property type="entry name" value="CRS2-associated factor 1, chloroplastic"/>
    <property type="match status" value="1"/>
</dbReference>
<dbReference type="Gene3D" id="3.30.110.60">
    <property type="entry name" value="YhbY-like"/>
    <property type="match status" value="2"/>
</dbReference>
<dbReference type="InterPro" id="IPR044599">
    <property type="entry name" value="CAF1P_plant"/>
</dbReference>
<dbReference type="InterPro" id="IPR001890">
    <property type="entry name" value="RNA-binding_CRM"/>
</dbReference>
<dbReference type="InterPro" id="IPR035920">
    <property type="entry name" value="YhbY-like_sf"/>
</dbReference>
<dbReference type="PANTHER" id="PTHR46247">
    <property type="entry name" value="CRS2-ASSOCIATED FACTOR 1, CHLOROPLASTIC"/>
    <property type="match status" value="1"/>
</dbReference>
<dbReference type="PANTHER" id="PTHR46247:SF4">
    <property type="entry name" value="CRS2-ASSOCIATED FACTOR 2, MITOCHONDRIAL"/>
    <property type="match status" value="1"/>
</dbReference>
<dbReference type="Pfam" id="PF01985">
    <property type="entry name" value="CRS1_YhbY"/>
    <property type="match status" value="2"/>
</dbReference>
<dbReference type="SMART" id="SM01103">
    <property type="entry name" value="CRS1_YhbY"/>
    <property type="match status" value="2"/>
</dbReference>
<dbReference type="SUPFAM" id="SSF75471">
    <property type="entry name" value="YhbY-like"/>
    <property type="match status" value="2"/>
</dbReference>
<dbReference type="PROSITE" id="PS51295">
    <property type="entry name" value="CRM"/>
    <property type="match status" value="2"/>
</dbReference>